<reference key="1">
    <citation type="journal article" date="2004" name="Science">
        <title>The 1.2-megabase genome sequence of Mimivirus.</title>
        <authorList>
            <person name="Raoult D."/>
            <person name="Audic S."/>
            <person name="Robert C."/>
            <person name="Abergel C."/>
            <person name="Renesto P."/>
            <person name="Ogata H."/>
            <person name="La Scola B."/>
            <person name="Susan M."/>
            <person name="Claverie J.-M."/>
        </authorList>
    </citation>
    <scope>NUCLEOTIDE SEQUENCE [LARGE SCALE GENOMIC DNA]</scope>
    <source>
        <strain>Rowbotham-Bradford</strain>
    </source>
</reference>
<gene>
    <name type="ordered locus">MIMI_L35</name>
</gene>
<dbReference type="EMBL" id="AY653733">
    <property type="protein sequence ID" value="AAV50310.1"/>
    <property type="molecule type" value="Genomic_DNA"/>
</dbReference>
<dbReference type="KEGG" id="vg:9924616"/>
<dbReference type="OrthoDB" id="7868at10239"/>
<dbReference type="Proteomes" id="UP000001134">
    <property type="component" value="Genome"/>
</dbReference>
<dbReference type="InterPro" id="IPR011044">
    <property type="entry name" value="Quino_amine_DH_bsu"/>
</dbReference>
<dbReference type="SUPFAM" id="SSF50969">
    <property type="entry name" value="YVTN repeat-like/Quinoprotein amine dehydrogenase"/>
    <property type="match status" value="1"/>
</dbReference>
<comment type="similarity">
    <text evidence="1">Belongs to the mimivirus BTB/WD family.</text>
</comment>
<keyword id="KW-1185">Reference proteome</keyword>
<organismHost>
    <name type="scientific">Acanthamoeba polyphaga</name>
    <name type="common">Amoeba</name>
    <dbReference type="NCBI Taxonomy" id="5757"/>
</organismHost>
<evidence type="ECO:0000305" key="1"/>
<sequence length="493" mass="58213">MSSNKLLKSFTEGIFTDLKLTLVDDYQQSITINVHKIILYIKCTFFEKLLLFNDGNITEKTINVPNVYVCRDIIESFYLVDNKSEVDKSQTNQDPMYQFQLYICRDFLGLLQDKNALFNLDIPINMLDDFFNFAELYSNNNNMIRLIFRNIPKNYDFELIPKNLLLAMKKYVSESRMYILDDEYKLIQYDLCPENLSSKIITHRIFNRKYNSEKYIYALGENDFAIVKNNTIEIYDYQNEELINQIQIGQLLINDIKDIEYCETNLLIVTGYTLLLINSDNGKILKHKKFDEHIKYVTFTINCIYVNFKKRIKVLNYETMDLIKDIECDNRHDYVGGKIIYDLSENDLSGCIIVEDVLSDKIISFNHPTGIIKRIYGLDVDFRFEKYVVVDWSDIIKIFDVKHGTLLSEYNIGKISEKYQLNNVTVLYAKFLHDTRYIIIKMNFGNYFVLDTLKQELMTISSKSLNEYRTHYKISSYCQYLPEINSALLNQID</sequence>
<protein>
    <recommendedName>
        <fullName>Putative BTB/POZ domain-containing protein L35</fullName>
    </recommendedName>
</protein>
<proteinExistence type="inferred from homology"/>
<organism>
    <name type="scientific">Acanthamoeba polyphaga mimivirus</name>
    <name type="common">APMV</name>
    <dbReference type="NCBI Taxonomy" id="212035"/>
    <lineage>
        <taxon>Viruses</taxon>
        <taxon>Varidnaviria</taxon>
        <taxon>Bamfordvirae</taxon>
        <taxon>Nucleocytoviricota</taxon>
        <taxon>Megaviricetes</taxon>
        <taxon>Imitervirales</taxon>
        <taxon>Mimiviridae</taxon>
        <taxon>Megamimivirinae</taxon>
        <taxon>Mimivirus</taxon>
        <taxon>Mimivirus bradfordmassiliense</taxon>
    </lineage>
</organism>
<accession>Q5UPB5</accession>
<feature type="chain" id="PRO_0000186222" description="Putative BTB/POZ domain-containing protein L35">
    <location>
        <begin position="1"/>
        <end position="493"/>
    </location>
</feature>
<feature type="domain" description="BTB">
    <location>
        <begin position="16"/>
        <end position="87"/>
    </location>
</feature>
<name>YL035_MIMIV</name>